<protein>
    <recommendedName>
        <fullName>Retinoic acid receptor RXR-beta-B</fullName>
    </recommendedName>
    <alternativeName>
        <fullName>Nuclear receptor subfamily 2 group B member 2-B</fullName>
    </alternativeName>
    <alternativeName>
        <fullName>Retinoic acid receptor RXR-delta</fullName>
    </alternativeName>
    <alternativeName>
        <fullName>Retinoid X receptor beta-B</fullName>
    </alternativeName>
    <alternativeName>
        <fullName>Retinoid X receptor delta</fullName>
    </alternativeName>
</protein>
<feature type="chain" id="PRO_0000053581" description="Retinoic acid receptor RXR-beta-B">
    <location>
        <begin position="1"/>
        <end position="422"/>
    </location>
</feature>
<feature type="domain" description="NR LBD" evidence="4">
    <location>
        <begin position="181"/>
        <end position="421"/>
    </location>
</feature>
<feature type="DNA-binding region" description="Nuclear receptor" evidence="3">
    <location>
        <begin position="90"/>
        <end position="155"/>
    </location>
</feature>
<feature type="zinc finger region" description="NR C4-type" evidence="3">
    <location>
        <begin position="90"/>
        <end position="110"/>
    </location>
</feature>
<feature type="zinc finger region" description="NR C4-type" evidence="3">
    <location>
        <begin position="126"/>
        <end position="150"/>
    </location>
</feature>
<feature type="region of interest" description="Modulating" evidence="1">
    <location>
        <begin position="1"/>
        <end position="89"/>
    </location>
</feature>
<feature type="region of interest" description="Hinge" evidence="1">
    <location>
        <begin position="156"/>
        <end position="178"/>
    </location>
</feature>
<feature type="region of interest" description="Disordered" evidence="5">
    <location>
        <begin position="161"/>
        <end position="182"/>
    </location>
</feature>
<feature type="compositionally biased region" description="Basic and acidic residues" evidence="5">
    <location>
        <begin position="161"/>
        <end position="173"/>
    </location>
</feature>
<reference evidence="8 9" key="1">
    <citation type="journal article" date="1995" name="Mol. Cell. Biol.">
        <title>New retinoid X receptor subtypes in zebra fish (Danio rerio) differentially modulate transcription and do not bind 9-cis retinoic acid.</title>
        <authorList>
            <person name="Jones B.B."/>
            <person name="Ohno C.K."/>
            <person name="Allenby G."/>
            <person name="Boffa M.B."/>
            <person name="Levin A.A."/>
            <person name="Grippo J.F."/>
            <person name="Petkovich M."/>
        </authorList>
    </citation>
    <scope>NUCLEOTIDE SEQUENCE [MRNA]</scope>
    <scope>FUNCTION</scope>
    <scope>HETERODIMERIZATION WITH RARGA</scope>
    <scope>DEVELOPMENTAL STAGE</scope>
</reference>
<reference key="2">
    <citation type="journal article" date="2006" name="Gene Expr. Patterns">
        <title>Characterization of retinoid-X receptor genes rxra, rxrba, rxrbb and rxrg during zebrafish development.</title>
        <authorList>
            <person name="Tallafuss A."/>
            <person name="Hale L.A."/>
            <person name="Yan Y.-L."/>
            <person name="Dudley L."/>
            <person name="Eisen J.S."/>
            <person name="Postlethwait J.H."/>
        </authorList>
    </citation>
    <scope>TISSUE SPECIFICITY</scope>
    <scope>DEVELOPMENTAL STAGE</scope>
</reference>
<dbReference type="EMBL" id="U29941">
    <property type="protein sequence ID" value="AAC59721.1"/>
    <property type="molecule type" value="mRNA"/>
</dbReference>
<dbReference type="PIR" id="I50516">
    <property type="entry name" value="I50516"/>
</dbReference>
<dbReference type="RefSeq" id="NP_571313.1">
    <property type="nucleotide sequence ID" value="NM_131238.1"/>
</dbReference>
<dbReference type="SMR" id="Q90417"/>
<dbReference type="FunCoup" id="Q90417">
    <property type="interactions" value="711"/>
</dbReference>
<dbReference type="STRING" id="7955.ENSDARP00000022973"/>
<dbReference type="PaxDb" id="7955-ENSDARP00000104696"/>
<dbReference type="GeneID" id="30486"/>
<dbReference type="KEGG" id="dre:30486"/>
<dbReference type="AGR" id="ZFIN:ZDB-GENE-990415-242"/>
<dbReference type="CTD" id="30486"/>
<dbReference type="ZFIN" id="ZDB-GENE-990415-242">
    <property type="gene designation" value="rxrbb"/>
</dbReference>
<dbReference type="eggNOG" id="KOG3575">
    <property type="taxonomic scope" value="Eukaryota"/>
</dbReference>
<dbReference type="InParanoid" id="Q90417"/>
<dbReference type="OrthoDB" id="5873264at2759"/>
<dbReference type="PhylomeDB" id="Q90417"/>
<dbReference type="PRO" id="PR:Q90417"/>
<dbReference type="Proteomes" id="UP000000437">
    <property type="component" value="Alternate scaffold 16"/>
</dbReference>
<dbReference type="Proteomes" id="UP000000437">
    <property type="component" value="Chromosome 16"/>
</dbReference>
<dbReference type="GO" id="GO:0090575">
    <property type="term" value="C:RNA polymerase II transcription regulator complex"/>
    <property type="evidence" value="ECO:0000318"/>
    <property type="project" value="GO_Central"/>
</dbReference>
<dbReference type="GO" id="GO:0000981">
    <property type="term" value="F:DNA-binding transcription factor activity, RNA polymerase II-specific"/>
    <property type="evidence" value="ECO:0000314"/>
    <property type="project" value="ZFIN"/>
</dbReference>
<dbReference type="GO" id="GO:0004879">
    <property type="term" value="F:nuclear receptor activity"/>
    <property type="evidence" value="ECO:0000318"/>
    <property type="project" value="GO_Central"/>
</dbReference>
<dbReference type="GO" id="GO:0003707">
    <property type="term" value="F:nuclear steroid receptor activity"/>
    <property type="evidence" value="ECO:0007669"/>
    <property type="project" value="InterPro"/>
</dbReference>
<dbReference type="GO" id="GO:0044323">
    <property type="term" value="F:retinoic acid-responsive element binding"/>
    <property type="evidence" value="ECO:0000318"/>
    <property type="project" value="GO_Central"/>
</dbReference>
<dbReference type="GO" id="GO:0008270">
    <property type="term" value="F:zinc ion binding"/>
    <property type="evidence" value="ECO:0007669"/>
    <property type="project" value="UniProtKB-KW"/>
</dbReference>
<dbReference type="GO" id="GO:0030154">
    <property type="term" value="P:cell differentiation"/>
    <property type="evidence" value="ECO:0000318"/>
    <property type="project" value="GO_Central"/>
</dbReference>
<dbReference type="GO" id="GO:0045892">
    <property type="term" value="P:negative regulation of DNA-templated transcription"/>
    <property type="evidence" value="ECO:0000314"/>
    <property type="project" value="UniProtKB"/>
</dbReference>
<dbReference type="GO" id="GO:0007399">
    <property type="term" value="P:nervous system development"/>
    <property type="evidence" value="ECO:0000318"/>
    <property type="project" value="GO_Central"/>
</dbReference>
<dbReference type="GO" id="GO:0045944">
    <property type="term" value="P:positive regulation of transcription by RNA polymerase II"/>
    <property type="evidence" value="ECO:0000318"/>
    <property type="project" value="GO_Central"/>
</dbReference>
<dbReference type="GO" id="GO:0048384">
    <property type="term" value="P:retinoic acid receptor signaling pathway"/>
    <property type="evidence" value="ECO:0000318"/>
    <property type="project" value="GO_Central"/>
</dbReference>
<dbReference type="CDD" id="cd06956">
    <property type="entry name" value="NR_DBD_RXR"/>
    <property type="match status" value="1"/>
</dbReference>
<dbReference type="CDD" id="cd06943">
    <property type="entry name" value="NR_LBD_RXR_like"/>
    <property type="match status" value="1"/>
</dbReference>
<dbReference type="FunFam" id="3.30.50.10:FF:000005">
    <property type="entry name" value="Retinoic acid receptor RXR-alpha"/>
    <property type="match status" value="1"/>
</dbReference>
<dbReference type="FunFam" id="1.10.565.10:FF:000052">
    <property type="entry name" value="Ultraspiracle nuclear receptor"/>
    <property type="match status" value="1"/>
</dbReference>
<dbReference type="Gene3D" id="3.30.50.10">
    <property type="entry name" value="Erythroid Transcription Factor GATA-1, subunit A"/>
    <property type="match status" value="1"/>
</dbReference>
<dbReference type="Gene3D" id="1.10.565.10">
    <property type="entry name" value="Retinoid X Receptor"/>
    <property type="match status" value="1"/>
</dbReference>
<dbReference type="InterPro" id="IPR035500">
    <property type="entry name" value="NHR-like_dom_sf"/>
</dbReference>
<dbReference type="InterPro" id="IPR021780">
    <property type="entry name" value="Nuc_recep-AF1"/>
</dbReference>
<dbReference type="InterPro" id="IPR000536">
    <property type="entry name" value="Nucl_hrmn_rcpt_lig-bd"/>
</dbReference>
<dbReference type="InterPro" id="IPR050274">
    <property type="entry name" value="Nuclear_hormone_rcpt_NR2"/>
</dbReference>
<dbReference type="InterPro" id="IPR001723">
    <property type="entry name" value="Nuclear_hrmn_rcpt"/>
</dbReference>
<dbReference type="InterPro" id="IPR000003">
    <property type="entry name" value="Retinoid-X_rcpt/HNF4"/>
</dbReference>
<dbReference type="InterPro" id="IPR001628">
    <property type="entry name" value="Znf_hrmn_rcpt"/>
</dbReference>
<dbReference type="InterPro" id="IPR013088">
    <property type="entry name" value="Znf_NHR/GATA"/>
</dbReference>
<dbReference type="PANTHER" id="PTHR24083">
    <property type="entry name" value="NUCLEAR HORMONE RECEPTOR"/>
    <property type="match status" value="1"/>
</dbReference>
<dbReference type="Pfam" id="PF00104">
    <property type="entry name" value="Hormone_recep"/>
    <property type="match status" value="1"/>
</dbReference>
<dbReference type="Pfam" id="PF11825">
    <property type="entry name" value="Nuc_recep-AF1"/>
    <property type="match status" value="1"/>
</dbReference>
<dbReference type="Pfam" id="PF00105">
    <property type="entry name" value="zf-C4"/>
    <property type="match status" value="1"/>
</dbReference>
<dbReference type="PRINTS" id="PR00545">
    <property type="entry name" value="RETINOIDXR"/>
</dbReference>
<dbReference type="PRINTS" id="PR00398">
    <property type="entry name" value="STRDHORMONER"/>
</dbReference>
<dbReference type="PRINTS" id="PR00047">
    <property type="entry name" value="STROIDFINGER"/>
</dbReference>
<dbReference type="SMART" id="SM00430">
    <property type="entry name" value="HOLI"/>
    <property type="match status" value="1"/>
</dbReference>
<dbReference type="SMART" id="SM00399">
    <property type="entry name" value="ZnF_C4"/>
    <property type="match status" value="1"/>
</dbReference>
<dbReference type="SUPFAM" id="SSF57716">
    <property type="entry name" value="Glucocorticoid receptor-like (DNA-binding domain)"/>
    <property type="match status" value="1"/>
</dbReference>
<dbReference type="SUPFAM" id="SSF48508">
    <property type="entry name" value="Nuclear receptor ligand-binding domain"/>
    <property type="match status" value="1"/>
</dbReference>
<dbReference type="PROSITE" id="PS51843">
    <property type="entry name" value="NR_LBD"/>
    <property type="match status" value="1"/>
</dbReference>
<dbReference type="PROSITE" id="PS00031">
    <property type="entry name" value="NUCLEAR_REC_DBD_1"/>
    <property type="match status" value="1"/>
</dbReference>
<dbReference type="PROSITE" id="PS51030">
    <property type="entry name" value="NUCLEAR_REC_DBD_2"/>
    <property type="match status" value="1"/>
</dbReference>
<proteinExistence type="evidence at transcript level"/>
<accession>Q90417</accession>
<evidence type="ECO:0000250" key="1"/>
<evidence type="ECO:0000255" key="2"/>
<evidence type="ECO:0000255" key="3">
    <source>
        <dbReference type="PROSITE-ProRule" id="PRU00407"/>
    </source>
</evidence>
<evidence type="ECO:0000255" key="4">
    <source>
        <dbReference type="PROSITE-ProRule" id="PRU01189"/>
    </source>
</evidence>
<evidence type="ECO:0000256" key="5">
    <source>
        <dbReference type="SAM" id="MobiDB-lite"/>
    </source>
</evidence>
<evidence type="ECO:0000269" key="6">
    <source>
    </source>
</evidence>
<evidence type="ECO:0000269" key="7">
    <source>
    </source>
</evidence>
<evidence type="ECO:0000305" key="8"/>
<evidence type="ECO:0000312" key="9">
    <source>
        <dbReference type="EMBL" id="AAC59721.1"/>
    </source>
</evidence>
<comment type="function">
    <text evidence="1 7">Receptor for retinoic acid. Retinoic acid receptors bind as heterodimers to their target response elements in response to their ligands, all-trans or 9-cis retinoic acid, and regulate gene expression in various biological processes. The rar/rxr heterodimers bind to the retinoic acid response elements (RARE) composed of tandem 5'-AGGTCA-3' sites known as DR1-DR5. The high affinity ligand for rxrs is 9-cis retinoic acid (By similarity).</text>
</comment>
<comment type="subunit">
    <text evidence="1">Homodimer (By similarity). Heterodimer; with a rar molecule (By similarity). Binds DNA preferentially as a rar/rxr heterodimer (By similarity). Heterodimerizes with rarga.</text>
</comment>
<comment type="subcellular location">
    <subcellularLocation>
        <location evidence="3">Nucleus</location>
    </subcellularLocation>
</comment>
<comment type="tissue specificity">
    <text evidence="6">Shows uniform expression from the blastula to mid-gastrula stages. At 12 hours post-fertilization (hpf), expressed ubiquitously but more weakly. At 24 hpf, restricted to the ventral diencephalon, pharangeal endoderm and trunk and tail mesoderm; mesoderm expression is in medial cells of each somite along the dorsoventral axis, forming stripes. At 48 hpf, expressed in forebrain, eye, midbrain and anterior hindbrain.</text>
</comment>
<comment type="developmental stage">
    <text evidence="6 7">Expressed both maternally and zygotically.</text>
</comment>
<comment type="domain">
    <text>Composed of three domains: a modulating N-terminal domain, a DNA-binding domain and a C-terminal ligand-binding domain.</text>
</comment>
<comment type="similarity">
    <text evidence="2">Belongs to the nuclear hormone receptor family. NR2 subfamily.</text>
</comment>
<sequence length="422" mass="46732">MNSLPPSTSAVSSPVSSVDSPLSAVSSSIGSPGVPGTPSIGYGPISNSQINSSMSVSRLHAVSSSDDVKPPFGLKSVSGSGPMLSQKRMCAICGDRSSGKHYGVYSCEGCKGFFKRTVRKDLSYTCRDNKECLVDKRQRNRCQYCRYQKCLAMGMKREAVQEERQKNKERDGDYECSSSANEEMPVEKILEAETAVEHRTDLHSDATGSPNDPVTNICQAADKQLFTLVEWAKRVPHFSDVPLDDQVILLRAGWNELLIAAFSHRSISVKDEILLATGLHVPKESTHNLGVEAFFDRESSHSAEVGALFDRVLTELVCKMRDMQMDKTELGCLRAIVLFNPDAKGLTSSSEVELLREKVYASLESYCKQKYPDQQGRFAKLLLRLPALRSIGLKCLEHLFFFKLIGNTPIDTFLMEMLESPH</sequence>
<name>RXRBB_DANRE</name>
<keyword id="KW-0238">DNA-binding</keyword>
<keyword id="KW-0479">Metal-binding</keyword>
<keyword id="KW-0539">Nucleus</keyword>
<keyword id="KW-0675">Receptor</keyword>
<keyword id="KW-1185">Reference proteome</keyword>
<keyword id="KW-0678">Repressor</keyword>
<keyword id="KW-0804">Transcription</keyword>
<keyword id="KW-0805">Transcription regulation</keyword>
<keyword id="KW-0862">Zinc</keyword>
<keyword id="KW-0863">Zinc-finger</keyword>
<gene>
    <name type="primary">rxrbb</name>
    <name type="synonym">nr2b2b</name>
    <name type="synonym">rxrd</name>
</gene>
<organism>
    <name type="scientific">Danio rerio</name>
    <name type="common">Zebrafish</name>
    <name type="synonym">Brachydanio rerio</name>
    <dbReference type="NCBI Taxonomy" id="7955"/>
    <lineage>
        <taxon>Eukaryota</taxon>
        <taxon>Metazoa</taxon>
        <taxon>Chordata</taxon>
        <taxon>Craniata</taxon>
        <taxon>Vertebrata</taxon>
        <taxon>Euteleostomi</taxon>
        <taxon>Actinopterygii</taxon>
        <taxon>Neopterygii</taxon>
        <taxon>Teleostei</taxon>
        <taxon>Ostariophysi</taxon>
        <taxon>Cypriniformes</taxon>
        <taxon>Danionidae</taxon>
        <taxon>Danioninae</taxon>
        <taxon>Danio</taxon>
    </lineage>
</organism>